<reference key="1">
    <citation type="journal article" date="2006" name="PLoS Biol.">
        <title>The genome of deep-sea vent chemolithoautotroph Thiomicrospira crunogena XCL-2.</title>
        <authorList>
            <person name="Scott K.M."/>
            <person name="Sievert S.M."/>
            <person name="Abril F.N."/>
            <person name="Ball L.A."/>
            <person name="Barrett C.J."/>
            <person name="Blake R.A."/>
            <person name="Boller A.J."/>
            <person name="Chain P.S.G."/>
            <person name="Clark J.A."/>
            <person name="Davis C.R."/>
            <person name="Detter C."/>
            <person name="Do K.F."/>
            <person name="Dobrinski K.P."/>
            <person name="Faza B.I."/>
            <person name="Fitzpatrick K.A."/>
            <person name="Freyermuth S.K."/>
            <person name="Harmer T.L."/>
            <person name="Hauser L.J."/>
            <person name="Huegler M."/>
            <person name="Kerfeld C.A."/>
            <person name="Klotz M.G."/>
            <person name="Kong W.W."/>
            <person name="Land M."/>
            <person name="Lapidus A."/>
            <person name="Larimer F.W."/>
            <person name="Longo D.L."/>
            <person name="Lucas S."/>
            <person name="Malfatti S.A."/>
            <person name="Massey S.E."/>
            <person name="Martin D.D."/>
            <person name="McCuddin Z."/>
            <person name="Meyer F."/>
            <person name="Moore J.L."/>
            <person name="Ocampo L.H. Jr."/>
            <person name="Paul J.H."/>
            <person name="Paulsen I.T."/>
            <person name="Reep D.K."/>
            <person name="Ren Q."/>
            <person name="Ross R.L."/>
            <person name="Sato P.Y."/>
            <person name="Thomas P."/>
            <person name="Tinkham L.E."/>
            <person name="Zeruth G.T."/>
        </authorList>
    </citation>
    <scope>NUCLEOTIDE SEQUENCE [LARGE SCALE GENOMIC DNA]</scope>
    <source>
        <strain>DSM 25203 / XCL-2</strain>
    </source>
</reference>
<sequence>MEHLNSLEHHFLIAMPNLTESWFDKTVIYIVEDNEHGTMGLVINLEHNLTVPELLDHFELTVEAPENYADQPVLMGGPVDLEHGFILHEPQGTWQKSLPLRDNLAMTVSEDFLKAMADGTAPEKIVVCLGFSGWEKGQLNDEIQANNWLTIPYNEALLFDVPNDQKWQVALNTLGISPESLSMDAGHD</sequence>
<protein>
    <recommendedName>
        <fullName evidence="1">UPF0301 protein Tcr_1827</fullName>
    </recommendedName>
</protein>
<dbReference type="EMBL" id="CP000109">
    <property type="protein sequence ID" value="ABB42419.1"/>
    <property type="molecule type" value="Genomic_DNA"/>
</dbReference>
<dbReference type="SMR" id="Q31EK4"/>
<dbReference type="STRING" id="317025.Tcr_1827"/>
<dbReference type="KEGG" id="tcx:Tcr_1827"/>
<dbReference type="eggNOG" id="COG1678">
    <property type="taxonomic scope" value="Bacteria"/>
</dbReference>
<dbReference type="HOGENOM" id="CLU_057596_1_0_6"/>
<dbReference type="OrthoDB" id="9807486at2"/>
<dbReference type="GO" id="GO:0005829">
    <property type="term" value="C:cytosol"/>
    <property type="evidence" value="ECO:0007669"/>
    <property type="project" value="TreeGrafter"/>
</dbReference>
<dbReference type="Gene3D" id="3.40.1740.10">
    <property type="entry name" value="VC0467-like"/>
    <property type="match status" value="1"/>
</dbReference>
<dbReference type="HAMAP" id="MF_00758">
    <property type="entry name" value="UPF0301"/>
    <property type="match status" value="1"/>
</dbReference>
<dbReference type="InterPro" id="IPR003774">
    <property type="entry name" value="AlgH-like"/>
</dbReference>
<dbReference type="NCBIfam" id="NF001266">
    <property type="entry name" value="PRK00228.1-1"/>
    <property type="match status" value="1"/>
</dbReference>
<dbReference type="PANTHER" id="PTHR30327">
    <property type="entry name" value="UNCHARACTERIZED PROTEIN YQGE"/>
    <property type="match status" value="1"/>
</dbReference>
<dbReference type="PANTHER" id="PTHR30327:SF1">
    <property type="entry name" value="UPF0301 PROTEIN YQGE"/>
    <property type="match status" value="1"/>
</dbReference>
<dbReference type="Pfam" id="PF02622">
    <property type="entry name" value="DUF179"/>
    <property type="match status" value="1"/>
</dbReference>
<dbReference type="SUPFAM" id="SSF143456">
    <property type="entry name" value="VC0467-like"/>
    <property type="match status" value="1"/>
</dbReference>
<name>Y1827_HYDCU</name>
<feature type="chain" id="PRO_0000258889" description="UPF0301 protein Tcr_1827">
    <location>
        <begin position="1"/>
        <end position="188"/>
    </location>
</feature>
<organism>
    <name type="scientific">Hydrogenovibrio crunogenus (strain DSM 25203 / XCL-2)</name>
    <name type="common">Thiomicrospira crunogena</name>
    <dbReference type="NCBI Taxonomy" id="317025"/>
    <lineage>
        <taxon>Bacteria</taxon>
        <taxon>Pseudomonadati</taxon>
        <taxon>Pseudomonadota</taxon>
        <taxon>Gammaproteobacteria</taxon>
        <taxon>Thiotrichales</taxon>
        <taxon>Piscirickettsiaceae</taxon>
        <taxon>Hydrogenovibrio</taxon>
    </lineage>
</organism>
<proteinExistence type="inferred from homology"/>
<evidence type="ECO:0000255" key="1">
    <source>
        <dbReference type="HAMAP-Rule" id="MF_00758"/>
    </source>
</evidence>
<gene>
    <name type="ordered locus">Tcr_1827</name>
</gene>
<accession>Q31EK4</accession>
<comment type="similarity">
    <text evidence="1">Belongs to the UPF0301 (AlgH) family.</text>
</comment>